<keyword id="KW-0025">Alternative splicing</keyword>
<keyword id="KW-1003">Cell membrane</keyword>
<keyword id="KW-0449">Lipoprotein</keyword>
<keyword id="KW-0472">Membrane</keyword>
<keyword id="KW-0519">Myristate</keyword>
<keyword id="KW-0564">Palmitate</keyword>
<keyword id="KW-1185">Reference proteome</keyword>
<comment type="function">
    <text evidence="1 4">Targets the cAMP-dependent protein kinase (PKA) to the plasma membrane, and permits functional coupling to the L-type calcium channel. The membrane-associated form reduces epithelial sodium channel (ENaC) activity, whereas the free cytoplasmic form may negatively regulate ENaC channel feedback inhibition by intracellular sodium (By similarity).</text>
</comment>
<comment type="subunit">
    <text evidence="1">Binds cAMP-dependent protein kinase (PKA). Interacts with PRKCA; only the cytoplasmic form is capable of interacting with PRKCA (By similarity).</text>
</comment>
<comment type="subcellular location">
    <subcellularLocation>
        <location evidence="1">Lateral cell membrane</location>
        <topology evidence="3">Lipid-anchor</topology>
    </subcellularLocation>
</comment>
<comment type="alternative products">
    <event type="alternative splicing"/>
    <isoform>
        <id>O55074-1</id>
        <name>Alpha</name>
        <sequence type="displayed"/>
    </isoform>
    <isoform>
        <id>Q7TN79-1</id>
        <name>Gamma</name>
        <sequence type="external"/>
    </isoform>
</comment>
<name>AKA7A_MOUSE</name>
<evidence type="ECO:0000250" key="1"/>
<evidence type="ECO:0000256" key="2">
    <source>
        <dbReference type="SAM" id="MobiDB-lite"/>
    </source>
</evidence>
<evidence type="ECO:0000269" key="3">
    <source>
    </source>
</evidence>
<evidence type="ECO:0000269" key="4">
    <source>
    </source>
</evidence>
<evidence type="ECO:0000305" key="5"/>
<feature type="initiator methionine" description="Removed">
    <location>
        <position position="1"/>
    </location>
</feature>
<feature type="chain" id="PRO_0000064532" description="A-kinase anchor protein 7 isoform alpha">
    <location>
        <begin position="2"/>
        <end position="81"/>
    </location>
</feature>
<feature type="region of interest" description="Required for membrane localization" evidence="1">
    <location>
        <begin position="2"/>
        <end position="11"/>
    </location>
</feature>
<feature type="region of interest" description="RII-binding" evidence="1">
    <location>
        <begin position="29"/>
        <end position="42"/>
    </location>
</feature>
<feature type="region of interest" description="Disordered" evidence="2">
    <location>
        <begin position="49"/>
        <end position="81"/>
    </location>
</feature>
<feature type="compositionally biased region" description="Basic and acidic residues" evidence="2">
    <location>
        <begin position="65"/>
        <end position="81"/>
    </location>
</feature>
<feature type="lipid moiety-binding region" description="N-myristoyl glycine" evidence="3">
    <location>
        <position position="2"/>
    </location>
</feature>
<feature type="lipid moiety-binding region" description="S-palmitoyl cysteine" evidence="3">
    <location>
        <position position="5"/>
    </location>
</feature>
<feature type="lipid moiety-binding region" description="S-palmitoyl cysteine" evidence="3">
    <location>
        <position position="6"/>
    </location>
</feature>
<feature type="sequence conflict" description="In Ref. 1; AAC40085." evidence="5" ref="1">
    <original>D</original>
    <variation>E</variation>
    <location>
        <position position="12"/>
    </location>
</feature>
<feature type="sequence conflict" description="In Ref. 1; AAC40085." evidence="5" ref="1">
    <original>R</original>
    <variation>K</variation>
    <location>
        <position position="22"/>
    </location>
</feature>
<feature type="sequence conflict" description="In Ref. 1; AAC40085." evidence="5" ref="1">
    <original>T</original>
    <variation>V</variation>
    <location>
        <position position="64"/>
    </location>
</feature>
<protein>
    <recommendedName>
        <fullName>A-kinase anchor protein 7 isoform alpha</fullName>
        <shortName>AKAP-7 isoform alpha</shortName>
    </recommendedName>
    <alternativeName>
        <fullName>A-kinase anchor protein 18</fullName>
        <shortName>AKAP-18</shortName>
    </alternativeName>
    <alternativeName>
        <fullName>A-kinase anchor protein 9 kDa</fullName>
        <shortName>AKAP 9</shortName>
    </alternativeName>
    <alternativeName>
        <fullName>Protein kinase A-anchoring protein 7 isoform alpha</fullName>
        <shortName>PRKA7 isoform alpha</shortName>
    </alternativeName>
</protein>
<dbReference type="EMBL" id="AF047716">
    <property type="protein sequence ID" value="AAC40085.1"/>
    <property type="molecule type" value="mRNA"/>
</dbReference>
<dbReference type="EMBL" id="AC153549">
    <property type="status" value="NOT_ANNOTATED_CDS"/>
    <property type="molecule type" value="Genomic_DNA"/>
</dbReference>
<dbReference type="EMBL" id="AC153550">
    <property type="status" value="NOT_ANNOTATED_CDS"/>
    <property type="molecule type" value="Genomic_DNA"/>
</dbReference>
<dbReference type="EMBL" id="CH466540">
    <property type="protein sequence ID" value="EDL04795.1"/>
    <property type="molecule type" value="Genomic_DNA"/>
</dbReference>
<dbReference type="CCDS" id="CCDS83688.1">
    <molecule id="O55074-1"/>
</dbReference>
<dbReference type="RefSeq" id="NP_001334389.1">
    <molecule id="O55074-1"/>
    <property type="nucleotide sequence ID" value="NM_001347460.2"/>
</dbReference>
<dbReference type="SMR" id="O55074"/>
<dbReference type="BioGRID" id="240608">
    <property type="interactions" value="2"/>
</dbReference>
<dbReference type="iPTMnet" id="O55074"/>
<dbReference type="PhosphoSitePlus" id="O55074"/>
<dbReference type="SwissPalm" id="O55074"/>
<dbReference type="PeptideAtlas" id="O55074"/>
<dbReference type="ProteomicsDB" id="296149">
    <molecule id="O55074-1"/>
</dbReference>
<dbReference type="Antibodypedia" id="19674">
    <property type="antibodies" value="297 antibodies from 28 providers"/>
</dbReference>
<dbReference type="DNASU" id="432442"/>
<dbReference type="Ensembl" id="ENSMUST00000100012.3">
    <molecule id="O55074-1"/>
    <property type="protein sequence ID" value="ENSMUSP00000097590.3"/>
    <property type="gene ID" value="ENSMUSG00000039166.17"/>
</dbReference>
<dbReference type="GeneID" id="432442"/>
<dbReference type="KEGG" id="mmu:432442"/>
<dbReference type="UCSC" id="uc007erh.1">
    <molecule id="O55074-1"/>
    <property type="organism name" value="mouse"/>
</dbReference>
<dbReference type="AGR" id="MGI:1859150"/>
<dbReference type="CTD" id="9465"/>
<dbReference type="MGI" id="MGI:1859150">
    <property type="gene designation" value="Akap7"/>
</dbReference>
<dbReference type="VEuPathDB" id="HostDB:ENSMUSG00000039166"/>
<dbReference type="GeneTree" id="ENSGT00390000012756"/>
<dbReference type="HOGENOM" id="CLU_177905_0_0_1"/>
<dbReference type="BioGRID-ORCS" id="432442">
    <property type="hits" value="3 hits in 77 CRISPR screens"/>
</dbReference>
<dbReference type="ChiTaRS" id="Akap7">
    <property type="organism name" value="mouse"/>
</dbReference>
<dbReference type="Proteomes" id="UP000000589">
    <property type="component" value="Chromosome 10"/>
</dbReference>
<dbReference type="Bgee" id="ENSMUSG00000039166">
    <property type="expression patterns" value="Expressed in animal zygote and 227 other cell types or tissues"/>
</dbReference>
<dbReference type="ExpressionAtlas" id="O55074">
    <property type="expression patterns" value="baseline and differential"/>
</dbReference>
<dbReference type="GO" id="GO:0098686">
    <property type="term" value="C:hippocampal mossy fiber to CA3 synapse"/>
    <property type="evidence" value="ECO:0000314"/>
    <property type="project" value="SynGO"/>
</dbReference>
<dbReference type="GO" id="GO:0016328">
    <property type="term" value="C:lateral plasma membrane"/>
    <property type="evidence" value="ECO:0007669"/>
    <property type="project" value="UniProtKB-SubCell"/>
</dbReference>
<dbReference type="GO" id="GO:0005634">
    <property type="term" value="C:nucleus"/>
    <property type="evidence" value="ECO:0000314"/>
    <property type="project" value="MGI"/>
</dbReference>
<dbReference type="GO" id="GO:0051018">
    <property type="term" value="F:protein kinase A binding"/>
    <property type="evidence" value="ECO:0000250"/>
    <property type="project" value="UniProtKB"/>
</dbReference>
<dbReference type="GO" id="GO:0019901">
    <property type="term" value="F:protein kinase binding"/>
    <property type="evidence" value="ECO:0000314"/>
    <property type="project" value="MGI"/>
</dbReference>
<dbReference type="GO" id="GO:0007178">
    <property type="term" value="P:cell surface receptor protein serine/threonine kinase signaling pathway"/>
    <property type="evidence" value="ECO:0000266"/>
    <property type="project" value="MGI"/>
</dbReference>
<dbReference type="GO" id="GO:0050804">
    <property type="term" value="P:modulation of chemical synaptic transmission"/>
    <property type="evidence" value="ECO:0000314"/>
    <property type="project" value="SynGO"/>
</dbReference>
<dbReference type="GO" id="GO:0008104">
    <property type="term" value="P:protein localization"/>
    <property type="evidence" value="ECO:0000266"/>
    <property type="project" value="MGI"/>
</dbReference>
<dbReference type="InterPro" id="IPR052641">
    <property type="entry name" value="AKAP7_isoform_gamma"/>
</dbReference>
<dbReference type="InterPro" id="IPR019511">
    <property type="entry name" value="AKAP7_RI-RII-bd_dom"/>
</dbReference>
<dbReference type="PANTHER" id="PTHR15934:SF6">
    <property type="entry name" value="A-KINASE ANCHOR PROTEIN 7 ISOFORM GAMMA"/>
    <property type="match status" value="1"/>
</dbReference>
<dbReference type="PANTHER" id="PTHR15934">
    <property type="entry name" value="RNA 2',3'-CYCLIC PHOSPHODIESTERASE"/>
    <property type="match status" value="1"/>
</dbReference>
<dbReference type="Pfam" id="PF10470">
    <property type="entry name" value="AKAP7_RIRII_bdg"/>
    <property type="match status" value="1"/>
</dbReference>
<sequence>MGQLCCFPFARDEGKICEKDRREPEDAELVRLSKRLVENAVLKAVQQYLEETQNKKQPGEGNSTKAEEGDRNGDGSDNNRK</sequence>
<gene>
    <name type="primary">Akap7</name>
    <name type="synonym">Akap18</name>
</gene>
<reference key="1">
    <citation type="journal article" date="1998" name="EMBO J.">
        <title>A novel lipid-anchored A-kinase anchoring protein facilitates cAMP-responsive membrane events.</title>
        <authorList>
            <person name="Fraser I.D.C."/>
            <person name="Tavalin S.J."/>
            <person name="Lester L.B."/>
            <person name="Langeberg L.K."/>
            <person name="Westphal A.M."/>
            <person name="Dean R.A."/>
            <person name="Marrion N.V."/>
            <person name="Scott J.D."/>
        </authorList>
    </citation>
    <scope>NUCLEOTIDE SEQUENCE [MRNA]</scope>
    <scope>SUBCELLULAR LOCATION</scope>
    <scope>MYRISTOYLATION AT GLY-2</scope>
    <scope>PALMITOYLATION AT CYS-5 AND CYS-6</scope>
</reference>
<reference key="2">
    <citation type="journal article" date="2009" name="PLoS Biol.">
        <title>Lineage-specific biology revealed by a finished genome assembly of the mouse.</title>
        <authorList>
            <person name="Church D.M."/>
            <person name="Goodstadt L."/>
            <person name="Hillier L.W."/>
            <person name="Zody M.C."/>
            <person name="Goldstein S."/>
            <person name="She X."/>
            <person name="Bult C.J."/>
            <person name="Agarwala R."/>
            <person name="Cherry J.L."/>
            <person name="DiCuccio M."/>
            <person name="Hlavina W."/>
            <person name="Kapustin Y."/>
            <person name="Meric P."/>
            <person name="Maglott D."/>
            <person name="Birtle Z."/>
            <person name="Marques A.C."/>
            <person name="Graves T."/>
            <person name="Zhou S."/>
            <person name="Teague B."/>
            <person name="Potamousis K."/>
            <person name="Churas C."/>
            <person name="Place M."/>
            <person name="Herschleb J."/>
            <person name="Runnheim R."/>
            <person name="Forrest D."/>
            <person name="Amos-Landgraf J."/>
            <person name="Schwartz D.C."/>
            <person name="Cheng Z."/>
            <person name="Lindblad-Toh K."/>
            <person name="Eichler E.E."/>
            <person name="Ponting C.P."/>
        </authorList>
    </citation>
    <scope>NUCLEOTIDE SEQUENCE [LARGE SCALE GENOMIC DNA]</scope>
    <source>
        <strain>C57BL/6J</strain>
    </source>
</reference>
<reference key="3">
    <citation type="submission" date="2005-07" db="EMBL/GenBank/DDBJ databases">
        <authorList>
            <person name="Mural R.J."/>
            <person name="Adams M.D."/>
            <person name="Myers E.W."/>
            <person name="Smith H.O."/>
            <person name="Venter J.C."/>
        </authorList>
    </citation>
    <scope>NUCLEOTIDE SEQUENCE [LARGE SCALE GENOMIC DNA]</scope>
</reference>
<reference key="4">
    <citation type="journal article" date="1998" name="Neuron">
        <title>Primary structure and function of an A kinase anchoring protein associated with calcium channels.</title>
        <authorList>
            <person name="Gray P.C."/>
            <person name="Johnson B.D."/>
            <person name="Westenbroek R.E."/>
            <person name="Hays L.G."/>
            <person name="Yates J.R. III"/>
            <person name="Scheuer T."/>
            <person name="Catterall W.A."/>
            <person name="Murphy B.J."/>
        </authorList>
    </citation>
    <scope>FUNCTION</scope>
</reference>
<reference key="5">
    <citation type="journal article" date="2010" name="Cell">
        <title>A tissue-specific atlas of mouse protein phosphorylation and expression.</title>
        <authorList>
            <person name="Huttlin E.L."/>
            <person name="Jedrychowski M.P."/>
            <person name="Elias J.E."/>
            <person name="Goswami T."/>
            <person name="Rad R."/>
            <person name="Beausoleil S.A."/>
            <person name="Villen J."/>
            <person name="Haas W."/>
            <person name="Sowa M.E."/>
            <person name="Gygi S.P."/>
        </authorList>
    </citation>
    <scope>IDENTIFICATION BY MASS SPECTROMETRY [LARGE SCALE ANALYSIS]</scope>
    <source>
        <tissue>Brain</tissue>
    </source>
</reference>
<organism>
    <name type="scientific">Mus musculus</name>
    <name type="common">Mouse</name>
    <dbReference type="NCBI Taxonomy" id="10090"/>
    <lineage>
        <taxon>Eukaryota</taxon>
        <taxon>Metazoa</taxon>
        <taxon>Chordata</taxon>
        <taxon>Craniata</taxon>
        <taxon>Vertebrata</taxon>
        <taxon>Euteleostomi</taxon>
        <taxon>Mammalia</taxon>
        <taxon>Eutheria</taxon>
        <taxon>Euarchontoglires</taxon>
        <taxon>Glires</taxon>
        <taxon>Rodentia</taxon>
        <taxon>Myomorpha</taxon>
        <taxon>Muroidea</taxon>
        <taxon>Muridae</taxon>
        <taxon>Murinae</taxon>
        <taxon>Mus</taxon>
        <taxon>Mus</taxon>
    </lineage>
</organism>
<accession>O55074</accession>
<accession>G3X9Q5</accession>
<proteinExistence type="evidence at protein level"/>